<feature type="chain" id="PRO_1000079837" description="Large ribosomal subunit protein bL28">
    <location>
        <begin position="1"/>
        <end position="62"/>
    </location>
</feature>
<proteinExistence type="inferred from homology"/>
<accession>A9NEV1</accession>
<reference key="1">
    <citation type="journal article" date="2011" name="J. Bacteriol.">
        <title>Complete genome and proteome of Acholeplasma laidlawii.</title>
        <authorList>
            <person name="Lazarev V.N."/>
            <person name="Levitskii S.A."/>
            <person name="Basovskii Y.I."/>
            <person name="Chukin M.M."/>
            <person name="Akopian T.A."/>
            <person name="Vereshchagin V.V."/>
            <person name="Kostrjukova E.S."/>
            <person name="Kovaleva G.Y."/>
            <person name="Kazanov M.D."/>
            <person name="Malko D.B."/>
            <person name="Vitreschak A.G."/>
            <person name="Sernova N.V."/>
            <person name="Gelfand M.S."/>
            <person name="Demina I.A."/>
            <person name="Serebryakova M.V."/>
            <person name="Galyamina M.A."/>
            <person name="Vtyurin N.N."/>
            <person name="Rogov S.I."/>
            <person name="Alexeev D.G."/>
            <person name="Ladygina V.G."/>
            <person name="Govorun V.M."/>
        </authorList>
    </citation>
    <scope>NUCLEOTIDE SEQUENCE [LARGE SCALE GENOMIC DNA]</scope>
    <source>
        <strain>PG-8A</strain>
    </source>
</reference>
<comment type="similarity">
    <text evidence="1">Belongs to the bacterial ribosomal protein bL28 family.</text>
</comment>
<organism>
    <name type="scientific">Acholeplasma laidlawii (strain PG-8A)</name>
    <dbReference type="NCBI Taxonomy" id="441768"/>
    <lineage>
        <taxon>Bacteria</taxon>
        <taxon>Bacillati</taxon>
        <taxon>Mycoplasmatota</taxon>
        <taxon>Mollicutes</taxon>
        <taxon>Acholeplasmatales</taxon>
        <taxon>Acholeplasmataceae</taxon>
        <taxon>Acholeplasma</taxon>
    </lineage>
</organism>
<protein>
    <recommendedName>
        <fullName evidence="1">Large ribosomal subunit protein bL28</fullName>
    </recommendedName>
    <alternativeName>
        <fullName evidence="2">50S ribosomal protein L28</fullName>
    </alternativeName>
</protein>
<sequence>MAKCYVTGKTTSFGNKRSHALNASRRTWKANLQTVRIKDENGNVKRVKISAKALKKLELERV</sequence>
<keyword id="KW-1185">Reference proteome</keyword>
<keyword id="KW-0687">Ribonucleoprotein</keyword>
<keyword id="KW-0689">Ribosomal protein</keyword>
<evidence type="ECO:0000255" key="1">
    <source>
        <dbReference type="HAMAP-Rule" id="MF_00373"/>
    </source>
</evidence>
<evidence type="ECO:0000305" key="2"/>
<dbReference type="EMBL" id="CP000896">
    <property type="protein sequence ID" value="ABX80881.1"/>
    <property type="molecule type" value="Genomic_DNA"/>
</dbReference>
<dbReference type="RefSeq" id="WP_012242212.1">
    <property type="nucleotide sequence ID" value="NC_010163.1"/>
</dbReference>
<dbReference type="SMR" id="A9NEV1"/>
<dbReference type="STRING" id="441768.ACL_0255"/>
<dbReference type="GeneID" id="41338444"/>
<dbReference type="KEGG" id="acl:ACL_0255"/>
<dbReference type="eggNOG" id="COG0227">
    <property type="taxonomic scope" value="Bacteria"/>
</dbReference>
<dbReference type="HOGENOM" id="CLU_064548_7_1_14"/>
<dbReference type="OrthoDB" id="9805609at2"/>
<dbReference type="Proteomes" id="UP000008558">
    <property type="component" value="Chromosome"/>
</dbReference>
<dbReference type="GO" id="GO:1990904">
    <property type="term" value="C:ribonucleoprotein complex"/>
    <property type="evidence" value="ECO:0007669"/>
    <property type="project" value="UniProtKB-KW"/>
</dbReference>
<dbReference type="GO" id="GO:0005840">
    <property type="term" value="C:ribosome"/>
    <property type="evidence" value="ECO:0007669"/>
    <property type="project" value="UniProtKB-KW"/>
</dbReference>
<dbReference type="GO" id="GO:0003735">
    <property type="term" value="F:structural constituent of ribosome"/>
    <property type="evidence" value="ECO:0007669"/>
    <property type="project" value="InterPro"/>
</dbReference>
<dbReference type="GO" id="GO:0006412">
    <property type="term" value="P:translation"/>
    <property type="evidence" value="ECO:0007669"/>
    <property type="project" value="UniProtKB-UniRule"/>
</dbReference>
<dbReference type="Gene3D" id="2.30.170.40">
    <property type="entry name" value="Ribosomal protein L28/L24"/>
    <property type="match status" value="1"/>
</dbReference>
<dbReference type="HAMAP" id="MF_00373">
    <property type="entry name" value="Ribosomal_bL28"/>
    <property type="match status" value="1"/>
</dbReference>
<dbReference type="InterPro" id="IPR050096">
    <property type="entry name" value="Bacterial_rp_bL28"/>
</dbReference>
<dbReference type="InterPro" id="IPR026569">
    <property type="entry name" value="Ribosomal_bL28"/>
</dbReference>
<dbReference type="InterPro" id="IPR034704">
    <property type="entry name" value="Ribosomal_bL28/bL31-like_sf"/>
</dbReference>
<dbReference type="InterPro" id="IPR001383">
    <property type="entry name" value="Ribosomal_bL28_bact-type"/>
</dbReference>
<dbReference type="InterPro" id="IPR037147">
    <property type="entry name" value="Ribosomal_bL28_sf"/>
</dbReference>
<dbReference type="NCBIfam" id="TIGR00009">
    <property type="entry name" value="L28"/>
    <property type="match status" value="1"/>
</dbReference>
<dbReference type="PANTHER" id="PTHR39080">
    <property type="entry name" value="50S RIBOSOMAL PROTEIN L28"/>
    <property type="match status" value="1"/>
</dbReference>
<dbReference type="PANTHER" id="PTHR39080:SF1">
    <property type="entry name" value="LARGE RIBOSOMAL SUBUNIT PROTEIN BL28A"/>
    <property type="match status" value="1"/>
</dbReference>
<dbReference type="Pfam" id="PF00830">
    <property type="entry name" value="Ribosomal_L28"/>
    <property type="match status" value="1"/>
</dbReference>
<dbReference type="SUPFAM" id="SSF143800">
    <property type="entry name" value="L28p-like"/>
    <property type="match status" value="1"/>
</dbReference>
<name>RL28_ACHLI</name>
<gene>
    <name evidence="1" type="primary">rpmB</name>
    <name type="ordered locus">ACL_0255</name>
</gene>